<organism>
    <name type="scientific">Desulfatibacillum aliphaticivorans</name>
    <dbReference type="NCBI Taxonomy" id="218208"/>
    <lineage>
        <taxon>Bacteria</taxon>
        <taxon>Pseudomonadati</taxon>
        <taxon>Thermodesulfobacteriota</taxon>
        <taxon>Desulfobacteria</taxon>
        <taxon>Desulfobacterales</taxon>
        <taxon>Desulfatibacillaceae</taxon>
        <taxon>Desulfatibacillum</taxon>
    </lineage>
</organism>
<comment type="similarity">
    <text evidence="1">Belongs to the universal ribosomal protein uL29 family.</text>
</comment>
<accession>B8FES7</accession>
<proteinExistence type="inferred from homology"/>
<keyword id="KW-1185">Reference proteome</keyword>
<keyword id="KW-0687">Ribonucleoprotein</keyword>
<keyword id="KW-0689">Ribosomal protein</keyword>
<sequence length="62" mass="7317">MKAKEIREMGADEIRRKIDDSTQEMFNLRFQHATGQLENTARLNKTKKEVARLKTILKEVEQ</sequence>
<protein>
    <recommendedName>
        <fullName evidence="1">Large ribosomal subunit protein uL29</fullName>
    </recommendedName>
    <alternativeName>
        <fullName evidence="2">50S ribosomal protein L29</fullName>
    </alternativeName>
</protein>
<name>RL29_DESAL</name>
<feature type="chain" id="PRO_1000121760" description="Large ribosomal subunit protein uL29">
    <location>
        <begin position="1"/>
        <end position="62"/>
    </location>
</feature>
<gene>
    <name evidence="1" type="primary">rpmC</name>
    <name type="ordered locus">Dalk_1907</name>
</gene>
<reference key="1">
    <citation type="journal article" date="2012" name="Environ. Microbiol.">
        <title>The genome sequence of Desulfatibacillum alkenivorans AK-01: a blueprint for anaerobic alkane oxidation.</title>
        <authorList>
            <person name="Callaghan A.V."/>
            <person name="Morris B.E."/>
            <person name="Pereira I.A."/>
            <person name="McInerney M.J."/>
            <person name="Austin R.N."/>
            <person name="Groves J.T."/>
            <person name="Kukor J.J."/>
            <person name="Suflita J.M."/>
            <person name="Young L.Y."/>
            <person name="Zylstra G.J."/>
            <person name="Wawrik B."/>
        </authorList>
    </citation>
    <scope>NUCLEOTIDE SEQUENCE [LARGE SCALE GENOMIC DNA]</scope>
    <source>
        <strain>AK-01</strain>
    </source>
</reference>
<evidence type="ECO:0000255" key="1">
    <source>
        <dbReference type="HAMAP-Rule" id="MF_00374"/>
    </source>
</evidence>
<evidence type="ECO:0000305" key="2"/>
<dbReference type="EMBL" id="CP001322">
    <property type="protein sequence ID" value="ACL03604.1"/>
    <property type="molecule type" value="Genomic_DNA"/>
</dbReference>
<dbReference type="RefSeq" id="WP_012611035.1">
    <property type="nucleotide sequence ID" value="NC_011768.1"/>
</dbReference>
<dbReference type="SMR" id="B8FES7"/>
<dbReference type="KEGG" id="dal:Dalk_1907"/>
<dbReference type="eggNOG" id="COG0255">
    <property type="taxonomic scope" value="Bacteria"/>
</dbReference>
<dbReference type="HOGENOM" id="CLU_158491_5_2_7"/>
<dbReference type="Proteomes" id="UP000000739">
    <property type="component" value="Chromosome"/>
</dbReference>
<dbReference type="GO" id="GO:0022625">
    <property type="term" value="C:cytosolic large ribosomal subunit"/>
    <property type="evidence" value="ECO:0007669"/>
    <property type="project" value="TreeGrafter"/>
</dbReference>
<dbReference type="GO" id="GO:0003735">
    <property type="term" value="F:structural constituent of ribosome"/>
    <property type="evidence" value="ECO:0007669"/>
    <property type="project" value="InterPro"/>
</dbReference>
<dbReference type="GO" id="GO:0006412">
    <property type="term" value="P:translation"/>
    <property type="evidence" value="ECO:0007669"/>
    <property type="project" value="UniProtKB-UniRule"/>
</dbReference>
<dbReference type="CDD" id="cd00427">
    <property type="entry name" value="Ribosomal_L29_HIP"/>
    <property type="match status" value="1"/>
</dbReference>
<dbReference type="FunFam" id="1.10.287.310:FF:000001">
    <property type="entry name" value="50S ribosomal protein L29"/>
    <property type="match status" value="1"/>
</dbReference>
<dbReference type="Gene3D" id="1.10.287.310">
    <property type="match status" value="1"/>
</dbReference>
<dbReference type="HAMAP" id="MF_00374">
    <property type="entry name" value="Ribosomal_uL29"/>
    <property type="match status" value="1"/>
</dbReference>
<dbReference type="InterPro" id="IPR050063">
    <property type="entry name" value="Ribosomal_protein_uL29"/>
</dbReference>
<dbReference type="InterPro" id="IPR001854">
    <property type="entry name" value="Ribosomal_uL29"/>
</dbReference>
<dbReference type="InterPro" id="IPR018254">
    <property type="entry name" value="Ribosomal_uL29_CS"/>
</dbReference>
<dbReference type="InterPro" id="IPR036049">
    <property type="entry name" value="Ribosomal_uL29_sf"/>
</dbReference>
<dbReference type="NCBIfam" id="TIGR00012">
    <property type="entry name" value="L29"/>
    <property type="match status" value="1"/>
</dbReference>
<dbReference type="PANTHER" id="PTHR10916">
    <property type="entry name" value="60S RIBOSOMAL PROTEIN L35/50S RIBOSOMAL PROTEIN L29"/>
    <property type="match status" value="1"/>
</dbReference>
<dbReference type="PANTHER" id="PTHR10916:SF0">
    <property type="entry name" value="LARGE RIBOSOMAL SUBUNIT PROTEIN UL29C"/>
    <property type="match status" value="1"/>
</dbReference>
<dbReference type="Pfam" id="PF00831">
    <property type="entry name" value="Ribosomal_L29"/>
    <property type="match status" value="1"/>
</dbReference>
<dbReference type="SUPFAM" id="SSF46561">
    <property type="entry name" value="Ribosomal protein L29 (L29p)"/>
    <property type="match status" value="1"/>
</dbReference>
<dbReference type="PROSITE" id="PS00579">
    <property type="entry name" value="RIBOSOMAL_L29"/>
    <property type="match status" value="1"/>
</dbReference>